<dbReference type="EMBL" id="AE017223">
    <property type="protein sequence ID" value="AAX73424.1"/>
    <property type="molecule type" value="Genomic_DNA"/>
</dbReference>
<dbReference type="SMR" id="Q57G10"/>
<dbReference type="EnsemblBacteria" id="AAX73424">
    <property type="protein sequence ID" value="AAX73424"/>
    <property type="gene ID" value="BruAb1_0001"/>
</dbReference>
<dbReference type="KEGG" id="bmb:BruAb1_0001"/>
<dbReference type="HOGENOM" id="CLU_026910_3_0_5"/>
<dbReference type="Proteomes" id="UP000000540">
    <property type="component" value="Chromosome I"/>
</dbReference>
<dbReference type="GO" id="GO:0005737">
    <property type="term" value="C:cytoplasm"/>
    <property type="evidence" value="ECO:0007669"/>
    <property type="project" value="UniProtKB-SubCell"/>
</dbReference>
<dbReference type="GO" id="GO:0005886">
    <property type="term" value="C:plasma membrane"/>
    <property type="evidence" value="ECO:0007669"/>
    <property type="project" value="TreeGrafter"/>
</dbReference>
<dbReference type="GO" id="GO:0005524">
    <property type="term" value="F:ATP binding"/>
    <property type="evidence" value="ECO:0007669"/>
    <property type="project" value="UniProtKB-UniRule"/>
</dbReference>
<dbReference type="GO" id="GO:0016887">
    <property type="term" value="F:ATP hydrolysis activity"/>
    <property type="evidence" value="ECO:0007669"/>
    <property type="project" value="InterPro"/>
</dbReference>
<dbReference type="GO" id="GO:0003688">
    <property type="term" value="F:DNA replication origin binding"/>
    <property type="evidence" value="ECO:0007669"/>
    <property type="project" value="UniProtKB-UniRule"/>
</dbReference>
<dbReference type="GO" id="GO:0008289">
    <property type="term" value="F:lipid binding"/>
    <property type="evidence" value="ECO:0007669"/>
    <property type="project" value="UniProtKB-KW"/>
</dbReference>
<dbReference type="GO" id="GO:0006270">
    <property type="term" value="P:DNA replication initiation"/>
    <property type="evidence" value="ECO:0007669"/>
    <property type="project" value="UniProtKB-UniRule"/>
</dbReference>
<dbReference type="GO" id="GO:0006275">
    <property type="term" value="P:regulation of DNA replication"/>
    <property type="evidence" value="ECO:0007669"/>
    <property type="project" value="UniProtKB-UniRule"/>
</dbReference>
<dbReference type="CDD" id="cd06571">
    <property type="entry name" value="Bac_DnaA_C"/>
    <property type="match status" value="1"/>
</dbReference>
<dbReference type="FunFam" id="1.10.1750.10:FF:000002">
    <property type="entry name" value="Chromosomal replication initiator protein DnaA"/>
    <property type="match status" value="1"/>
</dbReference>
<dbReference type="Gene3D" id="1.10.1750.10">
    <property type="match status" value="1"/>
</dbReference>
<dbReference type="Gene3D" id="1.10.8.60">
    <property type="match status" value="1"/>
</dbReference>
<dbReference type="Gene3D" id="3.30.300.180">
    <property type="match status" value="1"/>
</dbReference>
<dbReference type="Gene3D" id="3.40.50.300">
    <property type="entry name" value="P-loop containing nucleotide triphosphate hydrolases"/>
    <property type="match status" value="1"/>
</dbReference>
<dbReference type="HAMAP" id="MF_00377">
    <property type="entry name" value="DnaA_bact"/>
    <property type="match status" value="1"/>
</dbReference>
<dbReference type="InterPro" id="IPR003593">
    <property type="entry name" value="AAA+_ATPase"/>
</dbReference>
<dbReference type="InterPro" id="IPR001957">
    <property type="entry name" value="Chromosome_initiator_DnaA"/>
</dbReference>
<dbReference type="InterPro" id="IPR020591">
    <property type="entry name" value="Chromosome_initiator_DnaA-like"/>
</dbReference>
<dbReference type="InterPro" id="IPR018312">
    <property type="entry name" value="Chromosome_initiator_DnaA_CS"/>
</dbReference>
<dbReference type="InterPro" id="IPR013159">
    <property type="entry name" value="DnaA_C"/>
</dbReference>
<dbReference type="InterPro" id="IPR013317">
    <property type="entry name" value="DnaA_dom"/>
</dbReference>
<dbReference type="InterPro" id="IPR024633">
    <property type="entry name" value="DnaA_N_dom"/>
</dbReference>
<dbReference type="InterPro" id="IPR038454">
    <property type="entry name" value="DnaA_N_sf"/>
</dbReference>
<dbReference type="InterPro" id="IPR027417">
    <property type="entry name" value="P-loop_NTPase"/>
</dbReference>
<dbReference type="InterPro" id="IPR010921">
    <property type="entry name" value="Trp_repressor/repl_initiator"/>
</dbReference>
<dbReference type="NCBIfam" id="TIGR00362">
    <property type="entry name" value="DnaA"/>
    <property type="match status" value="1"/>
</dbReference>
<dbReference type="PANTHER" id="PTHR30050">
    <property type="entry name" value="CHROMOSOMAL REPLICATION INITIATOR PROTEIN DNAA"/>
    <property type="match status" value="1"/>
</dbReference>
<dbReference type="PANTHER" id="PTHR30050:SF2">
    <property type="entry name" value="CHROMOSOMAL REPLICATION INITIATOR PROTEIN DNAA"/>
    <property type="match status" value="1"/>
</dbReference>
<dbReference type="Pfam" id="PF00308">
    <property type="entry name" value="Bac_DnaA"/>
    <property type="match status" value="1"/>
</dbReference>
<dbReference type="Pfam" id="PF08299">
    <property type="entry name" value="Bac_DnaA_C"/>
    <property type="match status" value="1"/>
</dbReference>
<dbReference type="Pfam" id="PF11638">
    <property type="entry name" value="DnaA_N"/>
    <property type="match status" value="1"/>
</dbReference>
<dbReference type="PRINTS" id="PR00051">
    <property type="entry name" value="DNAA"/>
</dbReference>
<dbReference type="SMART" id="SM00382">
    <property type="entry name" value="AAA"/>
    <property type="match status" value="1"/>
</dbReference>
<dbReference type="SMART" id="SM00760">
    <property type="entry name" value="Bac_DnaA_C"/>
    <property type="match status" value="1"/>
</dbReference>
<dbReference type="SUPFAM" id="SSF52540">
    <property type="entry name" value="P-loop containing nucleoside triphosphate hydrolases"/>
    <property type="match status" value="1"/>
</dbReference>
<dbReference type="SUPFAM" id="SSF48295">
    <property type="entry name" value="TrpR-like"/>
    <property type="match status" value="1"/>
</dbReference>
<dbReference type="PROSITE" id="PS01008">
    <property type="entry name" value="DNAA"/>
    <property type="match status" value="1"/>
</dbReference>
<feature type="chain" id="PRO_0000114145" description="Chromosomal replication initiator protein DnaA">
    <location>
        <begin position="1"/>
        <end position="496"/>
    </location>
</feature>
<feature type="region of interest" description="Domain I, interacts with DnaA modulators" evidence="1">
    <location>
        <begin position="1"/>
        <end position="76"/>
    </location>
</feature>
<feature type="region of interest" description="Domain II" evidence="1">
    <location>
        <begin position="76"/>
        <end position="150"/>
    </location>
</feature>
<feature type="region of interest" description="Domain III, AAA+ region" evidence="1">
    <location>
        <begin position="151"/>
        <end position="373"/>
    </location>
</feature>
<feature type="region of interest" description="Domain IV, binds dsDNA" evidence="1">
    <location>
        <begin position="374"/>
        <end position="496"/>
    </location>
</feature>
<feature type="binding site" evidence="1">
    <location>
        <position position="197"/>
    </location>
    <ligand>
        <name>ATP</name>
        <dbReference type="ChEBI" id="CHEBI:30616"/>
    </ligand>
</feature>
<feature type="binding site" evidence="1">
    <location>
        <position position="199"/>
    </location>
    <ligand>
        <name>ATP</name>
        <dbReference type="ChEBI" id="CHEBI:30616"/>
    </ligand>
</feature>
<feature type="binding site" evidence="1">
    <location>
        <position position="200"/>
    </location>
    <ligand>
        <name>ATP</name>
        <dbReference type="ChEBI" id="CHEBI:30616"/>
    </ligand>
</feature>
<feature type="binding site" evidence="1">
    <location>
        <position position="201"/>
    </location>
    <ligand>
        <name>ATP</name>
        <dbReference type="ChEBI" id="CHEBI:30616"/>
    </ligand>
</feature>
<evidence type="ECO:0000255" key="1">
    <source>
        <dbReference type="HAMAP-Rule" id="MF_00377"/>
    </source>
</evidence>
<proteinExistence type="inferred from homology"/>
<accession>Q57G10</accession>
<protein>
    <recommendedName>
        <fullName evidence="1">Chromosomal replication initiator protein DnaA</fullName>
    </recommendedName>
</protein>
<comment type="function">
    <text evidence="1">Plays an essential role in the initiation and regulation of chromosomal replication. ATP-DnaA binds to the origin of replication (oriC) to initiate formation of the DNA replication initiation complex once per cell cycle. Binds the DnaA box (a 9 base pair repeat at the origin) and separates the double-stranded (ds)DNA. Forms a right-handed helical filament on oriC DNA; dsDNA binds to the exterior of the filament while single-stranded (ss)DNA is stabiized in the filament's interior. The ATP-DnaA-oriC complex binds and stabilizes one strand of the AT-rich DNA unwinding element (DUE), permitting loading of DNA polymerase. After initiation quickly degrades to an ADP-DnaA complex that is not apt for DNA replication. Binds acidic phospholipids.</text>
</comment>
<comment type="subunit">
    <text evidence="1">Oligomerizes as a right-handed, spiral filament on DNA at oriC.</text>
</comment>
<comment type="subcellular location">
    <subcellularLocation>
        <location evidence="1">Cytoplasm</location>
    </subcellularLocation>
</comment>
<comment type="domain">
    <text evidence="1">Domain I is involved in oligomerization and binding regulators, domain II is flexibile and of varying length in different bacteria, domain III forms the AAA+ region, while domain IV binds dsDNA.</text>
</comment>
<comment type="similarity">
    <text evidence="1">Belongs to the DnaA family.</text>
</comment>
<name>DNAA_BRUAB</name>
<organism>
    <name type="scientific">Brucella abortus biovar 1 (strain 9-941)</name>
    <dbReference type="NCBI Taxonomy" id="262698"/>
    <lineage>
        <taxon>Bacteria</taxon>
        <taxon>Pseudomonadati</taxon>
        <taxon>Pseudomonadota</taxon>
        <taxon>Alphaproteobacteria</taxon>
        <taxon>Hyphomicrobiales</taxon>
        <taxon>Brucellaceae</taxon>
        <taxon>Brucella/Ochrobactrum group</taxon>
        <taxon>Brucella</taxon>
    </lineage>
</organism>
<gene>
    <name evidence="1" type="primary">dnaA</name>
    <name type="ordered locus">BruAb1_0001</name>
</gene>
<sequence length="496" mass="55121">MKMDSAVSEEAFERLTAKLKARVGGEIYSSWFGRLKLDDISKSIVRLSVPTAFLRSWINNHYSELLTELWQEENPQILKVEVVVRGVSRVVRSAAPAETCDNAEAKPAVTPREKMVFPVGQSFGGQSLGEKRGSAVVAESAAATGAVLGSPLDPRYTFDTFVDGASNRVALAAARTIAEAGSSAVRFNPLFIHASVGLGKTHLLQAIAAAALQRQEKARVVYLTAEYFMWRFATAIRDNNALSFKEQLRDIDLLVIDDMQFLQGKSIQHEFCHLLNTLLDSAKQVVVAADRAPSELESLDVRVRSRLQGGVALEVAAPDYEMRLEMLRRRLASAQCEDASLDIGEEILAHVARTVTGSGRELEGAFNQLLFRQSFEPNISIDRVDELLGHLTRAGEPKRIRIEEIQRIVARHYNVSKQDLLSNRRTRTIVKPRQVAMYLAKMMTPRSLPEIGRRFGGRDHTTVLHAVRKIEDLVGADTKLAQELELLKRLINDQAA</sequence>
<reference key="1">
    <citation type="journal article" date="2005" name="J. Bacteriol.">
        <title>Completion of the genome sequence of Brucella abortus and comparison to the highly similar genomes of Brucella melitensis and Brucella suis.</title>
        <authorList>
            <person name="Halling S.M."/>
            <person name="Peterson-Burch B.D."/>
            <person name="Bricker B.J."/>
            <person name="Zuerner R.L."/>
            <person name="Qing Z."/>
            <person name="Li L.-L."/>
            <person name="Kapur V."/>
            <person name="Alt D.P."/>
            <person name="Olsen S.C."/>
        </authorList>
    </citation>
    <scope>NUCLEOTIDE SEQUENCE [LARGE SCALE GENOMIC DNA]</scope>
    <source>
        <strain>9-941</strain>
    </source>
</reference>
<keyword id="KW-0067">ATP-binding</keyword>
<keyword id="KW-0963">Cytoplasm</keyword>
<keyword id="KW-0235">DNA replication</keyword>
<keyword id="KW-0238">DNA-binding</keyword>
<keyword id="KW-0446">Lipid-binding</keyword>
<keyword id="KW-0547">Nucleotide-binding</keyword>